<sequence length="879" mass="98008">MAEELSFQGDGSNRLPPQNIEAEEAILGGILLDPEAIGRVSEVLITEAFYISAHRDIYQAALRLHAQGKPTDLLSVTSWLTDNELLTRIGGRNKLATLVDRTVSAVNIDALAGLVMEKYLRRQLIKAGNEIVHLGYETEKELPIVLDQAEQKVFGVTQERPQSGLVHIADTLINNFQEIEERNQGIALPGIPCGFYDLDAMTSGFQRSDLIIVAGRPSMGKTAFCLNLANNIAATMKLPVAVFSLEMSKEQLVQRLLASEAQIESGYLRSGRLSQTQWEPLSRAISMLSEMPIFIDDTPNITVTQMRSQARRLQAEQGVELGLIVIDYLQLMEGGGDNRVQELSKITRSLKGLARELSVPVIALSQLSRGVEARTNKRPMLSDLRESGCLTGDSLVTLAPGGLQIPIRELVGKSGFAIWALNQATLKLEKAIVSNAFSTGVKPVFTLTTRKGCKIRATANHKFLTIHGWRRLDELSIRQHLCLPRHIPSFDKQTMTYAEVALLGHLIGDGCTLPRHAIQYTTREIDLAENVFFLAKEVFGDAITPRISPERSWYQVYLSATQRLTRNLRNPVAKWLDSLGVFGLRSYEKFVPQELFSQPIELISCFLRHLWSTDGSIKLVGGKKPRPIAYYATSSYRLAVDVQTLLLKLGINATLKLVPQVGKGRNQYHVKITGKPDLDLFIKKVGAVGEYKLNSLQQIFEYLENCIHNTNRDIIPKDVWKKIVVPAMQSVQLTTRELHSNIGTSYCGLALYKANLSRERALKVAEVVQSSELLTLAKSDVYWDEIVSIEYSGEEEVFDLTVPGLHNFIANNIVVHNSIEQDADLVIMLYRDDYYNSDTPDRGLAEVIVAKHRNGPTGTVKLLFDPQFTKFKNLARSGY</sequence>
<dbReference type="EC" id="5.6.2.3" evidence="1"/>
<dbReference type="EC" id="3.1.-.-" evidence="2"/>
<dbReference type="EMBL" id="BA000019">
    <property type="protein sequence ID" value="BAB72536.1"/>
    <property type="molecule type" value="Genomic_DNA"/>
</dbReference>
<dbReference type="PIR" id="AI1878">
    <property type="entry name" value="AI1878"/>
</dbReference>
<dbReference type="RefSeq" id="WP_010994754.1">
    <property type="nucleotide sequence ID" value="NZ_RSCN01000009.1"/>
</dbReference>
<dbReference type="SMR" id="Q8YZA1"/>
<dbReference type="STRING" id="103690.gene:10492589"/>
<dbReference type="MEROPS" id="N10.002"/>
<dbReference type="KEGG" id="ana:all0578"/>
<dbReference type="eggNOG" id="COG0305">
    <property type="taxonomic scope" value="Bacteria"/>
</dbReference>
<dbReference type="eggNOG" id="COG1372">
    <property type="taxonomic scope" value="Bacteria"/>
</dbReference>
<dbReference type="OrthoDB" id="9773982at2"/>
<dbReference type="Proteomes" id="UP000002483">
    <property type="component" value="Chromosome"/>
</dbReference>
<dbReference type="GO" id="GO:0005829">
    <property type="term" value="C:cytosol"/>
    <property type="evidence" value="ECO:0007669"/>
    <property type="project" value="TreeGrafter"/>
</dbReference>
<dbReference type="GO" id="GO:1990077">
    <property type="term" value="C:primosome complex"/>
    <property type="evidence" value="ECO:0007669"/>
    <property type="project" value="UniProtKB-KW"/>
</dbReference>
<dbReference type="GO" id="GO:0005524">
    <property type="term" value="F:ATP binding"/>
    <property type="evidence" value="ECO:0007669"/>
    <property type="project" value="UniProtKB-KW"/>
</dbReference>
<dbReference type="GO" id="GO:0016887">
    <property type="term" value="F:ATP hydrolysis activity"/>
    <property type="evidence" value="ECO:0007669"/>
    <property type="project" value="InterPro"/>
</dbReference>
<dbReference type="GO" id="GO:0003677">
    <property type="term" value="F:DNA binding"/>
    <property type="evidence" value="ECO:0007669"/>
    <property type="project" value="UniProtKB-KW"/>
</dbReference>
<dbReference type="GO" id="GO:0003678">
    <property type="term" value="F:DNA helicase activity"/>
    <property type="evidence" value="ECO:0007669"/>
    <property type="project" value="InterPro"/>
</dbReference>
<dbReference type="GO" id="GO:0004519">
    <property type="term" value="F:endonuclease activity"/>
    <property type="evidence" value="ECO:0007669"/>
    <property type="project" value="UniProtKB-KW"/>
</dbReference>
<dbReference type="GO" id="GO:0006269">
    <property type="term" value="P:DNA replication, synthesis of primer"/>
    <property type="evidence" value="ECO:0007669"/>
    <property type="project" value="UniProtKB-KW"/>
</dbReference>
<dbReference type="GO" id="GO:0016539">
    <property type="term" value="P:intein-mediated protein splicing"/>
    <property type="evidence" value="ECO:0007669"/>
    <property type="project" value="InterPro"/>
</dbReference>
<dbReference type="GO" id="GO:0006314">
    <property type="term" value="P:intron homing"/>
    <property type="evidence" value="ECO:0007669"/>
    <property type="project" value="UniProtKB-KW"/>
</dbReference>
<dbReference type="CDD" id="cd00984">
    <property type="entry name" value="DnaB_C"/>
    <property type="match status" value="1"/>
</dbReference>
<dbReference type="CDD" id="cd00081">
    <property type="entry name" value="Hint"/>
    <property type="match status" value="2"/>
</dbReference>
<dbReference type="FunFam" id="1.10.860.10:FF:000001">
    <property type="entry name" value="Replicative DNA helicase"/>
    <property type="match status" value="1"/>
</dbReference>
<dbReference type="Gene3D" id="1.10.860.10">
    <property type="entry name" value="DNAb Helicase, Chain A"/>
    <property type="match status" value="1"/>
</dbReference>
<dbReference type="Gene3D" id="2.170.16.10">
    <property type="entry name" value="Hedgehog/Intein (Hint) domain"/>
    <property type="match status" value="2"/>
</dbReference>
<dbReference type="Gene3D" id="3.10.28.10">
    <property type="entry name" value="Homing endonucleases"/>
    <property type="match status" value="1"/>
</dbReference>
<dbReference type="Gene3D" id="3.40.50.300">
    <property type="entry name" value="P-loop containing nucleotide triphosphate hydrolases"/>
    <property type="match status" value="2"/>
</dbReference>
<dbReference type="InterPro" id="IPR003593">
    <property type="entry name" value="AAA+_ATPase"/>
</dbReference>
<dbReference type="InterPro" id="IPR036185">
    <property type="entry name" value="DNA_heli_DnaB-like_N_sf"/>
</dbReference>
<dbReference type="InterPro" id="IPR007692">
    <property type="entry name" value="DNA_helicase_DnaB"/>
</dbReference>
<dbReference type="InterPro" id="IPR007694">
    <property type="entry name" value="DNA_helicase_DnaB-like_C"/>
</dbReference>
<dbReference type="InterPro" id="IPR007693">
    <property type="entry name" value="DNA_helicase_DnaB-like_N"/>
</dbReference>
<dbReference type="InterPro" id="IPR016136">
    <property type="entry name" value="DNA_helicase_N/primase_C"/>
</dbReference>
<dbReference type="InterPro" id="IPR003586">
    <property type="entry name" value="Hint_dom_C"/>
</dbReference>
<dbReference type="InterPro" id="IPR003587">
    <property type="entry name" value="Hint_dom_N"/>
</dbReference>
<dbReference type="InterPro" id="IPR036844">
    <property type="entry name" value="Hint_dom_sf"/>
</dbReference>
<dbReference type="InterPro" id="IPR027434">
    <property type="entry name" value="Homing_endonucl"/>
</dbReference>
<dbReference type="InterPro" id="IPR006142">
    <property type="entry name" value="INTEIN"/>
</dbReference>
<dbReference type="InterPro" id="IPR030934">
    <property type="entry name" value="Intein_C"/>
</dbReference>
<dbReference type="InterPro" id="IPR004042">
    <property type="entry name" value="Intein_endonuc_central"/>
</dbReference>
<dbReference type="InterPro" id="IPR006141">
    <property type="entry name" value="Intein_N"/>
</dbReference>
<dbReference type="InterPro" id="IPR004860">
    <property type="entry name" value="LAGLIDADG_dom"/>
</dbReference>
<dbReference type="InterPro" id="IPR027417">
    <property type="entry name" value="P-loop_NTPase"/>
</dbReference>
<dbReference type="NCBIfam" id="TIGR00665">
    <property type="entry name" value="DnaB"/>
    <property type="match status" value="1"/>
</dbReference>
<dbReference type="NCBIfam" id="TIGR01443">
    <property type="entry name" value="intein_Cterm"/>
    <property type="match status" value="1"/>
</dbReference>
<dbReference type="NCBIfam" id="TIGR01445">
    <property type="entry name" value="intein_Nterm"/>
    <property type="match status" value="1"/>
</dbReference>
<dbReference type="NCBIfam" id="NF005852">
    <property type="entry name" value="PRK07773.1"/>
    <property type="match status" value="1"/>
</dbReference>
<dbReference type="PANTHER" id="PTHR30153:SF2">
    <property type="entry name" value="REPLICATIVE DNA HELICASE"/>
    <property type="match status" value="1"/>
</dbReference>
<dbReference type="PANTHER" id="PTHR30153">
    <property type="entry name" value="REPLICATIVE DNA HELICASE DNAB"/>
    <property type="match status" value="1"/>
</dbReference>
<dbReference type="Pfam" id="PF00772">
    <property type="entry name" value="DnaB"/>
    <property type="match status" value="1"/>
</dbReference>
<dbReference type="Pfam" id="PF03796">
    <property type="entry name" value="DnaB_C"/>
    <property type="match status" value="2"/>
</dbReference>
<dbReference type="Pfam" id="PF14890">
    <property type="entry name" value="Intein_splicing"/>
    <property type="match status" value="1"/>
</dbReference>
<dbReference type="Pfam" id="PF14528">
    <property type="entry name" value="LAGLIDADG_3"/>
    <property type="match status" value="1"/>
</dbReference>
<dbReference type="PRINTS" id="PR00379">
    <property type="entry name" value="INTEIN"/>
</dbReference>
<dbReference type="SMART" id="SM00382">
    <property type="entry name" value="AAA"/>
    <property type="match status" value="1"/>
</dbReference>
<dbReference type="SMART" id="SM00305">
    <property type="entry name" value="HintC"/>
    <property type="match status" value="1"/>
</dbReference>
<dbReference type="SMART" id="SM00306">
    <property type="entry name" value="HintN"/>
    <property type="match status" value="1"/>
</dbReference>
<dbReference type="SUPFAM" id="SSF51294">
    <property type="entry name" value="Hedgehog/intein (Hint) domain"/>
    <property type="match status" value="1"/>
</dbReference>
<dbReference type="SUPFAM" id="SSF55608">
    <property type="entry name" value="Homing endonucleases"/>
    <property type="match status" value="1"/>
</dbReference>
<dbReference type="SUPFAM" id="SSF48024">
    <property type="entry name" value="N-terminal domain of DnaB helicase"/>
    <property type="match status" value="1"/>
</dbReference>
<dbReference type="SUPFAM" id="SSF52540">
    <property type="entry name" value="P-loop containing nucleoside triphosphate hydrolases"/>
    <property type="match status" value="1"/>
</dbReference>
<dbReference type="PROSITE" id="PS50818">
    <property type="entry name" value="INTEIN_C_TER"/>
    <property type="match status" value="1"/>
</dbReference>
<dbReference type="PROSITE" id="PS50819">
    <property type="entry name" value="INTEIN_ENDONUCLEASE"/>
    <property type="match status" value="1"/>
</dbReference>
<dbReference type="PROSITE" id="PS50817">
    <property type="entry name" value="INTEIN_N_TER"/>
    <property type="match status" value="1"/>
</dbReference>
<dbReference type="PROSITE" id="PS51199">
    <property type="entry name" value="SF4_HELICASE"/>
    <property type="match status" value="2"/>
</dbReference>
<accession>Q8YZA1</accession>
<evidence type="ECO:0000250" key="1">
    <source>
        <dbReference type="UniProtKB" id="P0ACB0"/>
    </source>
</evidence>
<evidence type="ECO:0000250" key="2">
    <source>
        <dbReference type="UniProtKB" id="Q55418"/>
    </source>
</evidence>
<evidence type="ECO:0000255" key="3"/>
<evidence type="ECO:0000255" key="4">
    <source>
        <dbReference type="PROSITE-ProRule" id="PRU00273"/>
    </source>
</evidence>
<evidence type="ECO:0000255" key="5">
    <source>
        <dbReference type="PROSITE-ProRule" id="PRU00596"/>
    </source>
</evidence>
<evidence type="ECO:0000305" key="6"/>
<organism>
    <name type="scientific">Nostoc sp. (strain PCC 7120 / SAG 25.82 / UTEX 2576)</name>
    <dbReference type="NCBI Taxonomy" id="103690"/>
    <lineage>
        <taxon>Bacteria</taxon>
        <taxon>Bacillati</taxon>
        <taxon>Cyanobacteriota</taxon>
        <taxon>Cyanophyceae</taxon>
        <taxon>Nostocales</taxon>
        <taxon>Nostocaceae</taxon>
        <taxon>Nostoc</taxon>
    </lineage>
</organism>
<comment type="function">
    <text evidence="1">The main replicative DNA helicase, it participates in initiation and elongation during chromosome replication. Travels ahead of the DNA replisome, separating dsDNA into templates for DNA synthesis. A processive ATP-dependent 5'-3' DNA helicase it has DNA-dependent ATPase activity.</text>
</comment>
<comment type="function">
    <text evidence="2">The intein is an endonuclease.</text>
</comment>
<comment type="catalytic activity">
    <reaction evidence="1">
        <text>Couples ATP hydrolysis with the unwinding of duplex DNA at the replication fork by translocating in the 5'-3' direction. This creates two antiparallel DNA single strands (ssDNA). The leading ssDNA polymer is the template for DNA polymerase III holoenzyme which synthesizes a continuous strand.</text>
        <dbReference type="EC" id="5.6.2.3"/>
    </reaction>
</comment>
<comment type="catalytic activity">
    <reaction evidence="1">
        <text>ATP + H2O = ADP + phosphate + H(+)</text>
        <dbReference type="Rhea" id="RHEA:13065"/>
        <dbReference type="ChEBI" id="CHEBI:15377"/>
        <dbReference type="ChEBI" id="CHEBI:15378"/>
        <dbReference type="ChEBI" id="CHEBI:30616"/>
        <dbReference type="ChEBI" id="CHEBI:43474"/>
        <dbReference type="ChEBI" id="CHEBI:456216"/>
        <dbReference type="EC" id="5.6.2.3"/>
    </reaction>
</comment>
<comment type="subunit">
    <text evidence="1">Homohexamer.</text>
</comment>
<comment type="PTM">
    <text evidence="2">This protein undergoes a protein self splicing that involves a post-translational excision of the intervening region (intein) followed by peptide ligation.</text>
</comment>
<comment type="similarity">
    <text evidence="6">Belongs to the helicase family. DnaB subfamily.</text>
</comment>
<feature type="chain" id="PRO_0000013270" description="Replicative DNA helicase DnaB, 1st part" evidence="3">
    <location>
        <begin position="1"/>
        <end position="388"/>
    </location>
</feature>
<feature type="chain" id="PRO_0000013271" description="Endonuclease PI-AspHIP">
    <location>
        <begin position="389"/>
        <end position="817"/>
    </location>
</feature>
<feature type="chain" id="PRO_0000013272" description="Replicative DNA helicase DnaB, 2nd part" evidence="3">
    <location>
        <begin position="818"/>
        <end position="879"/>
    </location>
</feature>
<feature type="domain" description="SF4 helicase; first part" evidence="5">
    <location>
        <begin position="184"/>
        <end position="451"/>
    </location>
</feature>
<feature type="domain" description="DOD-type homing endonuclease" evidence="4">
    <location>
        <begin position="502"/>
        <end position="651"/>
    </location>
</feature>
<feature type="domain" description="SF4 helicase; second part" evidence="5">
    <location>
        <begin position="614"/>
        <end position="878"/>
    </location>
</feature>
<feature type="binding site" evidence="5">
    <location>
        <begin position="215"/>
        <end position="222"/>
    </location>
    <ligand>
        <name>ATP</name>
        <dbReference type="ChEBI" id="CHEBI:30616"/>
    </ligand>
</feature>
<proteinExistence type="inferred from homology"/>
<keyword id="KW-0067">ATP-binding</keyword>
<keyword id="KW-0068">Autocatalytic cleavage</keyword>
<keyword id="KW-0235">DNA replication</keyword>
<keyword id="KW-0238">DNA-binding</keyword>
<keyword id="KW-0255">Endonuclease</keyword>
<keyword id="KW-0347">Helicase</keyword>
<keyword id="KW-0378">Hydrolase</keyword>
<keyword id="KW-0404">Intron homing</keyword>
<keyword id="KW-0413">Isomerase</keyword>
<keyword id="KW-0540">Nuclease</keyword>
<keyword id="KW-0547">Nucleotide-binding</keyword>
<keyword id="KW-0639">Primosome</keyword>
<keyword id="KW-0651">Protein splicing</keyword>
<keyword id="KW-1185">Reference proteome</keyword>
<keyword id="KW-0677">Repeat</keyword>
<name>DNAB_NOSS1</name>
<protein>
    <recommendedName>
        <fullName>Replicative DNA helicase DnaB</fullName>
        <ecNumber evidence="1">5.6.2.3</ecNumber>
    </recommendedName>
    <alternativeName>
        <fullName evidence="6">DNA 5'-3' helicase DnaB</fullName>
    </alternativeName>
    <component>
        <recommendedName>
            <fullName>Endonuclease PI-AspHIP</fullName>
            <ecNumber evidence="2">3.1.-.-</ecNumber>
        </recommendedName>
        <alternativeName>
            <fullName>Asp DnaB intein</fullName>
        </alternativeName>
    </component>
</protein>
<gene>
    <name type="primary">dnaB</name>
    <name type="ordered locus">all0578</name>
</gene>
<reference key="1">
    <citation type="journal article" date="2001" name="DNA Res.">
        <title>Complete genomic sequence of the filamentous nitrogen-fixing cyanobacterium Anabaena sp. strain PCC 7120.</title>
        <authorList>
            <person name="Kaneko T."/>
            <person name="Nakamura Y."/>
            <person name="Wolk C.P."/>
            <person name="Kuritz T."/>
            <person name="Sasamoto S."/>
            <person name="Watanabe A."/>
            <person name="Iriguchi M."/>
            <person name="Ishikawa A."/>
            <person name="Kawashima K."/>
            <person name="Kimura T."/>
            <person name="Kishida Y."/>
            <person name="Kohara M."/>
            <person name="Matsumoto M."/>
            <person name="Matsuno A."/>
            <person name="Muraki A."/>
            <person name="Nakazaki N."/>
            <person name="Shimpo S."/>
            <person name="Sugimoto M."/>
            <person name="Takazawa M."/>
            <person name="Yamada M."/>
            <person name="Yasuda M."/>
            <person name="Tabata S."/>
        </authorList>
    </citation>
    <scope>NUCLEOTIDE SEQUENCE [LARGE SCALE GENOMIC DNA]</scope>
    <source>
        <strain>PCC 7120 / SAG 25.82 / UTEX 2576</strain>
    </source>
</reference>